<feature type="chain" id="PRO_0000209791" description="DegV domain-containing protein SAS1368">
    <location>
        <begin position="1"/>
        <end position="279"/>
    </location>
</feature>
<feature type="domain" description="DegV" evidence="3">
    <location>
        <begin position="4"/>
        <end position="278"/>
    </location>
</feature>
<feature type="binding site" evidence="2">
    <location>
        <position position="61"/>
    </location>
    <ligand>
        <name>hexadecanoate</name>
        <dbReference type="ChEBI" id="CHEBI:7896"/>
    </ligand>
</feature>
<feature type="binding site" evidence="2">
    <location>
        <position position="93"/>
    </location>
    <ligand>
        <name>hexadecanoate</name>
        <dbReference type="ChEBI" id="CHEBI:7896"/>
    </ligand>
</feature>
<accession>Q6G9D6</accession>
<protein>
    <recommendedName>
        <fullName>DegV domain-containing protein SAS1368</fullName>
    </recommendedName>
</protein>
<sequence>MTKQIIVTDSTSDLSKEYLEANNIHVIPLSLTIEGASYVDQVDITSEEFINHIENDEDVKTSQPAIGEFISAYEELGKDGSEIISIHLSSGLSGTYNTAYQASQMVDANVTVIDSKSISFGLGYQIQHLVELVKEGVSTSEIVKKLNHLRENIKLFVVIGQLNQLIKGGRISKTKGLIGNLMKIKPIGTLDDGRLELVHNARTQNSSIQYLKKEIAEFIGDHEIKSIGVAHANVIEYVDKLKKVFNEAFHVNNYDINVTTPVISAHTGQGAIGLVVLKK</sequence>
<keyword id="KW-0446">Lipid-binding</keyword>
<evidence type="ECO:0000250" key="1"/>
<evidence type="ECO:0000250" key="2">
    <source>
        <dbReference type="UniProtKB" id="Q9X1H9"/>
    </source>
</evidence>
<evidence type="ECO:0000255" key="3">
    <source>
        <dbReference type="PROSITE-ProRule" id="PRU00815"/>
    </source>
</evidence>
<dbReference type="EMBL" id="BX571857">
    <property type="protein sequence ID" value="CAG43144.1"/>
    <property type="molecule type" value="Genomic_DNA"/>
</dbReference>
<dbReference type="SMR" id="Q6G9D6"/>
<dbReference type="KEGG" id="sas:SAS1368"/>
<dbReference type="HOGENOM" id="CLU_048251_3_2_9"/>
<dbReference type="GO" id="GO:0008289">
    <property type="term" value="F:lipid binding"/>
    <property type="evidence" value="ECO:0007669"/>
    <property type="project" value="UniProtKB-KW"/>
</dbReference>
<dbReference type="Gene3D" id="3.30.1180.10">
    <property type="match status" value="1"/>
</dbReference>
<dbReference type="Gene3D" id="3.40.50.10170">
    <property type="match status" value="1"/>
</dbReference>
<dbReference type="InterPro" id="IPR003797">
    <property type="entry name" value="DegV"/>
</dbReference>
<dbReference type="InterPro" id="IPR043168">
    <property type="entry name" value="DegV_C"/>
</dbReference>
<dbReference type="InterPro" id="IPR050270">
    <property type="entry name" value="DegV_domain_contain"/>
</dbReference>
<dbReference type="NCBIfam" id="TIGR00762">
    <property type="entry name" value="DegV"/>
    <property type="match status" value="1"/>
</dbReference>
<dbReference type="PANTHER" id="PTHR33434">
    <property type="entry name" value="DEGV DOMAIN-CONTAINING PROTEIN DR_1986-RELATED"/>
    <property type="match status" value="1"/>
</dbReference>
<dbReference type="PANTHER" id="PTHR33434:SF8">
    <property type="entry name" value="DEGV DOMAIN-CONTAINING PROTEIN SPR1019"/>
    <property type="match status" value="1"/>
</dbReference>
<dbReference type="Pfam" id="PF02645">
    <property type="entry name" value="DegV"/>
    <property type="match status" value="1"/>
</dbReference>
<dbReference type="SUPFAM" id="SSF82549">
    <property type="entry name" value="DAK1/DegV-like"/>
    <property type="match status" value="1"/>
</dbReference>
<dbReference type="PROSITE" id="PS51482">
    <property type="entry name" value="DEGV"/>
    <property type="match status" value="1"/>
</dbReference>
<gene>
    <name type="ordered locus">SAS1368</name>
</gene>
<reference key="1">
    <citation type="journal article" date="2004" name="Proc. Natl. Acad. Sci. U.S.A.">
        <title>Complete genomes of two clinical Staphylococcus aureus strains: evidence for the rapid evolution of virulence and drug resistance.</title>
        <authorList>
            <person name="Holden M.T.G."/>
            <person name="Feil E.J."/>
            <person name="Lindsay J.A."/>
            <person name="Peacock S.J."/>
            <person name="Day N.P.J."/>
            <person name="Enright M.C."/>
            <person name="Foster T.J."/>
            <person name="Moore C.E."/>
            <person name="Hurst L."/>
            <person name="Atkin R."/>
            <person name="Barron A."/>
            <person name="Bason N."/>
            <person name="Bentley S.D."/>
            <person name="Chillingworth C."/>
            <person name="Chillingworth T."/>
            <person name="Churcher C."/>
            <person name="Clark L."/>
            <person name="Corton C."/>
            <person name="Cronin A."/>
            <person name="Doggett J."/>
            <person name="Dowd L."/>
            <person name="Feltwell T."/>
            <person name="Hance Z."/>
            <person name="Harris B."/>
            <person name="Hauser H."/>
            <person name="Holroyd S."/>
            <person name="Jagels K."/>
            <person name="James K.D."/>
            <person name="Lennard N."/>
            <person name="Line A."/>
            <person name="Mayes R."/>
            <person name="Moule S."/>
            <person name="Mungall K."/>
            <person name="Ormond D."/>
            <person name="Quail M.A."/>
            <person name="Rabbinowitsch E."/>
            <person name="Rutherford K.M."/>
            <person name="Sanders M."/>
            <person name="Sharp S."/>
            <person name="Simmonds M."/>
            <person name="Stevens K."/>
            <person name="Whitehead S."/>
            <person name="Barrell B.G."/>
            <person name="Spratt B.G."/>
            <person name="Parkhill J."/>
        </authorList>
    </citation>
    <scope>NUCLEOTIDE SEQUENCE [LARGE SCALE GENOMIC DNA]</scope>
    <source>
        <strain>MSSA476</strain>
    </source>
</reference>
<name>Y1368_STAAS</name>
<comment type="function">
    <text evidence="1">May bind long-chain fatty acids, such as palmitate, and may play a role in lipid transport or fatty acid metabolism.</text>
</comment>
<proteinExistence type="inferred from homology"/>
<organism>
    <name type="scientific">Staphylococcus aureus (strain MSSA476)</name>
    <dbReference type="NCBI Taxonomy" id="282459"/>
    <lineage>
        <taxon>Bacteria</taxon>
        <taxon>Bacillati</taxon>
        <taxon>Bacillota</taxon>
        <taxon>Bacilli</taxon>
        <taxon>Bacillales</taxon>
        <taxon>Staphylococcaceae</taxon>
        <taxon>Staphylococcus</taxon>
    </lineage>
</organism>